<proteinExistence type="inferred from homology"/>
<organism>
    <name type="scientific">Nostoc sp. (strain PCC 7120 / SAG 25.82 / UTEX 2576)</name>
    <dbReference type="NCBI Taxonomy" id="103690"/>
    <lineage>
        <taxon>Bacteria</taxon>
        <taxon>Bacillati</taxon>
        <taxon>Cyanobacteriota</taxon>
        <taxon>Cyanophyceae</taxon>
        <taxon>Nostocales</taxon>
        <taxon>Nostocaceae</taxon>
        <taxon>Nostoc</taxon>
    </lineage>
</organism>
<dbReference type="EC" id="2.1.1.329" evidence="1"/>
<dbReference type="EMBL" id="BA000019">
    <property type="protein sequence ID" value="BAB76951.1"/>
    <property type="molecule type" value="Genomic_DNA"/>
</dbReference>
<dbReference type="PIR" id="AD2462">
    <property type="entry name" value="AD2462"/>
</dbReference>
<dbReference type="SMR" id="Q8YLP4"/>
<dbReference type="STRING" id="103690.gene:10497311"/>
<dbReference type="KEGG" id="ana:alr5252"/>
<dbReference type="eggNOG" id="COG2226">
    <property type="taxonomic scope" value="Bacteria"/>
</dbReference>
<dbReference type="OrthoDB" id="9808140at2"/>
<dbReference type="UniPathway" id="UPA00995"/>
<dbReference type="Proteomes" id="UP000002483">
    <property type="component" value="Chromosome"/>
</dbReference>
<dbReference type="GO" id="GO:0052624">
    <property type="term" value="F:2-phytyl-1,4-naphthoquinone methyltransferase activity"/>
    <property type="evidence" value="ECO:0007669"/>
    <property type="project" value="UniProtKB-EC"/>
</dbReference>
<dbReference type="GO" id="GO:0032259">
    <property type="term" value="P:methylation"/>
    <property type="evidence" value="ECO:0007669"/>
    <property type="project" value="UniProtKB-KW"/>
</dbReference>
<dbReference type="GO" id="GO:0042372">
    <property type="term" value="P:phylloquinone biosynthetic process"/>
    <property type="evidence" value="ECO:0007669"/>
    <property type="project" value="UniProtKB-UniRule"/>
</dbReference>
<dbReference type="CDD" id="cd02440">
    <property type="entry name" value="AdoMet_MTases"/>
    <property type="match status" value="1"/>
</dbReference>
<dbReference type="Gene3D" id="3.40.50.150">
    <property type="entry name" value="Vaccinia Virus protein VP39"/>
    <property type="match status" value="1"/>
</dbReference>
<dbReference type="HAMAP" id="MF_01982">
    <property type="entry name" value="MenG_phylloquinone_subfam"/>
    <property type="match status" value="1"/>
</dbReference>
<dbReference type="HAMAP" id="MF_01813">
    <property type="entry name" value="MenG_UbiE_methyltr"/>
    <property type="match status" value="1"/>
</dbReference>
<dbReference type="InterPro" id="IPR032904">
    <property type="entry name" value="MenG"/>
</dbReference>
<dbReference type="InterPro" id="IPR029063">
    <property type="entry name" value="SAM-dependent_MTases_sf"/>
</dbReference>
<dbReference type="InterPro" id="IPR004033">
    <property type="entry name" value="UbiE/COQ5_MeTrFase"/>
</dbReference>
<dbReference type="InterPro" id="IPR023576">
    <property type="entry name" value="UbiE/COQ5_MeTrFase_CS"/>
</dbReference>
<dbReference type="NCBIfam" id="TIGR01934">
    <property type="entry name" value="MenG_MenH_UbiE"/>
    <property type="match status" value="1"/>
</dbReference>
<dbReference type="NCBIfam" id="NF001244">
    <property type="entry name" value="PRK00216.1-5"/>
    <property type="match status" value="1"/>
</dbReference>
<dbReference type="PANTHER" id="PTHR43591:SF24">
    <property type="entry name" value="2-METHOXY-6-POLYPRENYL-1,4-BENZOQUINOL METHYLASE, MITOCHONDRIAL"/>
    <property type="match status" value="1"/>
</dbReference>
<dbReference type="PANTHER" id="PTHR43591">
    <property type="entry name" value="METHYLTRANSFERASE"/>
    <property type="match status" value="1"/>
</dbReference>
<dbReference type="Pfam" id="PF01209">
    <property type="entry name" value="Ubie_methyltran"/>
    <property type="match status" value="1"/>
</dbReference>
<dbReference type="SUPFAM" id="SSF53335">
    <property type="entry name" value="S-adenosyl-L-methionine-dependent methyltransferases"/>
    <property type="match status" value="1"/>
</dbReference>
<dbReference type="PROSITE" id="PS51608">
    <property type="entry name" value="SAM_MT_UBIE"/>
    <property type="match status" value="1"/>
</dbReference>
<dbReference type="PROSITE" id="PS01183">
    <property type="entry name" value="UBIE_1"/>
    <property type="match status" value="1"/>
</dbReference>
<name>MENG_NOSS1</name>
<comment type="function">
    <text evidence="1">Methyltransferase required for the conversion of 2-phytyl-1,4-beta-naphthoquinol to phylloquinol.</text>
</comment>
<comment type="catalytic activity">
    <reaction evidence="1">
        <text>demethylphylloquinol + S-adenosyl-L-methionine = phylloquinol + S-adenosyl-L-homocysteine + H(+)</text>
        <dbReference type="Rhea" id="RHEA:40551"/>
        <dbReference type="ChEBI" id="CHEBI:15378"/>
        <dbReference type="ChEBI" id="CHEBI:28433"/>
        <dbReference type="ChEBI" id="CHEBI:57856"/>
        <dbReference type="ChEBI" id="CHEBI:59789"/>
        <dbReference type="ChEBI" id="CHEBI:87844"/>
        <dbReference type="EC" id="2.1.1.329"/>
    </reaction>
</comment>
<comment type="pathway">
    <text evidence="1">Cofactor biosynthesis; phylloquinone biosynthesis.</text>
</comment>
<comment type="similarity">
    <text evidence="1">Belongs to the class I-like SAM-binding methyltransferase superfamily. MenG/UbiE family.</text>
</comment>
<reference key="1">
    <citation type="journal article" date="2001" name="DNA Res.">
        <title>Complete genomic sequence of the filamentous nitrogen-fixing cyanobacterium Anabaena sp. strain PCC 7120.</title>
        <authorList>
            <person name="Kaneko T."/>
            <person name="Nakamura Y."/>
            <person name="Wolk C.P."/>
            <person name="Kuritz T."/>
            <person name="Sasamoto S."/>
            <person name="Watanabe A."/>
            <person name="Iriguchi M."/>
            <person name="Ishikawa A."/>
            <person name="Kawashima K."/>
            <person name="Kimura T."/>
            <person name="Kishida Y."/>
            <person name="Kohara M."/>
            <person name="Matsumoto M."/>
            <person name="Matsuno A."/>
            <person name="Muraki A."/>
            <person name="Nakazaki N."/>
            <person name="Shimpo S."/>
            <person name="Sugimoto M."/>
            <person name="Takazawa M."/>
            <person name="Yamada M."/>
            <person name="Yasuda M."/>
            <person name="Tabata S."/>
        </authorList>
    </citation>
    <scope>NUCLEOTIDE SEQUENCE [LARGE SCALE GENOMIC DNA]</scope>
    <source>
        <strain>PCC 7120 / SAG 25.82 / UTEX 2576</strain>
    </source>
</reference>
<evidence type="ECO:0000255" key="1">
    <source>
        <dbReference type="HAMAP-Rule" id="MF_01982"/>
    </source>
</evidence>
<sequence>MTNKIRAIFDRIAPVYDQLNDWLSLGQHRIWKEMAIKWTGAKPGDTCLDLCCGSGDLALRLARRVGSTGQVSGVDFSANLLETAKQRAQSQYPQPNISWVEANVLDLPFKDNQFDAATMGYGLRNVTDIPRSLQELHRVLKPNAKAAILDFHRPNNQQFRTFQQWYLDSIVVPLADRLGVKEEYAYISPSLDRFPIGKEQVEIALKVGFTSATHYPIANGMMGVLIISK</sequence>
<feature type="chain" id="PRO_0000193236" description="2-phytyl-1,4-naphtoquinone methyltransferase">
    <location>
        <begin position="1"/>
        <end position="229"/>
    </location>
</feature>
<keyword id="KW-0489">Methyltransferase</keyword>
<keyword id="KW-1185">Reference proteome</keyword>
<keyword id="KW-0949">S-adenosyl-L-methionine</keyword>
<keyword id="KW-0808">Transferase</keyword>
<gene>
    <name evidence="1" type="primary">menG</name>
    <name type="ordered locus">alr5252</name>
</gene>
<accession>Q8YLP4</accession>
<protein>
    <recommendedName>
        <fullName evidence="1">2-phytyl-1,4-naphtoquinone methyltransferase</fullName>
        <ecNumber evidence="1">2.1.1.329</ecNumber>
    </recommendedName>
    <alternativeName>
        <fullName evidence="1">Demethylphylloquinone methyltransferase</fullName>
    </alternativeName>
</protein>